<organism>
    <name type="scientific">Cronobacter sakazakii (strain ATCC BAA-894)</name>
    <name type="common">Enterobacter sakazakii</name>
    <dbReference type="NCBI Taxonomy" id="290339"/>
    <lineage>
        <taxon>Bacteria</taxon>
        <taxon>Pseudomonadati</taxon>
        <taxon>Pseudomonadota</taxon>
        <taxon>Gammaproteobacteria</taxon>
        <taxon>Enterobacterales</taxon>
        <taxon>Enterobacteriaceae</taxon>
        <taxon>Cronobacter</taxon>
    </lineage>
</organism>
<comment type="function">
    <text evidence="1">Catalyzes the ATP-dependent phosphorylation of L-homoserine to L-homoserine phosphate.</text>
</comment>
<comment type="catalytic activity">
    <reaction evidence="1">
        <text>L-homoserine + ATP = O-phospho-L-homoserine + ADP + H(+)</text>
        <dbReference type="Rhea" id="RHEA:13985"/>
        <dbReference type="ChEBI" id="CHEBI:15378"/>
        <dbReference type="ChEBI" id="CHEBI:30616"/>
        <dbReference type="ChEBI" id="CHEBI:57476"/>
        <dbReference type="ChEBI" id="CHEBI:57590"/>
        <dbReference type="ChEBI" id="CHEBI:456216"/>
        <dbReference type="EC" id="2.7.1.39"/>
    </reaction>
</comment>
<comment type="pathway">
    <text evidence="1">Amino-acid biosynthesis; L-threonine biosynthesis; L-threonine from L-aspartate: step 4/5.</text>
</comment>
<comment type="subcellular location">
    <subcellularLocation>
        <location evidence="1">Cytoplasm</location>
    </subcellularLocation>
</comment>
<comment type="similarity">
    <text evidence="1">Belongs to the GHMP kinase family. Homoserine kinase subfamily.</text>
</comment>
<accession>A7MIJ7</accession>
<keyword id="KW-0028">Amino-acid biosynthesis</keyword>
<keyword id="KW-0067">ATP-binding</keyword>
<keyword id="KW-0963">Cytoplasm</keyword>
<keyword id="KW-0418">Kinase</keyword>
<keyword id="KW-0547">Nucleotide-binding</keyword>
<keyword id="KW-1185">Reference proteome</keyword>
<keyword id="KW-0791">Threonine biosynthesis</keyword>
<keyword id="KW-0808">Transferase</keyword>
<protein>
    <recommendedName>
        <fullName evidence="1">Homoserine kinase</fullName>
        <shortName evidence="1">HK</shortName>
        <shortName evidence="1">HSK</shortName>
        <ecNumber evidence="1">2.7.1.39</ecNumber>
    </recommendedName>
</protein>
<sequence length="309" mass="33424">MVKVYAPASIGNVSVGFDVLGAAVSPVNGELLGDCVTVEAAAEFSLTNTGRFVSKLPAEPRENIAWQCWERFCQEIGKTVPVAMTLEKNMPIGSGLGSSACSVVAGLMAMNEFCGKPLSDDRLLTLMGELEGRISGSIHYDNVAPCFLGGLQLMLEENNIISQPVPCFDEWLWVMAYPGIKVSTAEARAILPAQYRRQDCISHGRYLAGFIHACHTRQPQLAAKLMRDVIAEPYRTKLLPGFSEARQAALETGALACGISGSGPTLFAVCDKTDTAQRVAEWLKQHYLQNQEGFVHICRLDTAGARVLG</sequence>
<evidence type="ECO:0000255" key="1">
    <source>
        <dbReference type="HAMAP-Rule" id="MF_00384"/>
    </source>
</evidence>
<dbReference type="EC" id="2.7.1.39" evidence="1"/>
<dbReference type="EMBL" id="CP000783">
    <property type="protein sequence ID" value="ABU78555.1"/>
    <property type="molecule type" value="Genomic_DNA"/>
</dbReference>
<dbReference type="RefSeq" id="WP_007781610.1">
    <property type="nucleotide sequence ID" value="NC_009778.1"/>
</dbReference>
<dbReference type="SMR" id="A7MIJ7"/>
<dbReference type="GeneID" id="45716892"/>
<dbReference type="KEGG" id="esa:ESA_03334"/>
<dbReference type="HOGENOM" id="CLU_041243_1_1_6"/>
<dbReference type="UniPathway" id="UPA00050">
    <property type="reaction ID" value="UER00064"/>
</dbReference>
<dbReference type="Proteomes" id="UP000000260">
    <property type="component" value="Chromosome"/>
</dbReference>
<dbReference type="GO" id="GO:0005737">
    <property type="term" value="C:cytoplasm"/>
    <property type="evidence" value="ECO:0007669"/>
    <property type="project" value="UniProtKB-SubCell"/>
</dbReference>
<dbReference type="GO" id="GO:0005524">
    <property type="term" value="F:ATP binding"/>
    <property type="evidence" value="ECO:0007669"/>
    <property type="project" value="UniProtKB-UniRule"/>
</dbReference>
<dbReference type="GO" id="GO:0004413">
    <property type="term" value="F:homoserine kinase activity"/>
    <property type="evidence" value="ECO:0007669"/>
    <property type="project" value="UniProtKB-UniRule"/>
</dbReference>
<dbReference type="GO" id="GO:0009088">
    <property type="term" value="P:threonine biosynthetic process"/>
    <property type="evidence" value="ECO:0007669"/>
    <property type="project" value="UniProtKB-UniRule"/>
</dbReference>
<dbReference type="FunFam" id="3.30.230.10:FF:000020">
    <property type="entry name" value="Homoserine kinase"/>
    <property type="match status" value="1"/>
</dbReference>
<dbReference type="FunFam" id="3.30.70.890:FF:000002">
    <property type="entry name" value="Homoserine kinase"/>
    <property type="match status" value="1"/>
</dbReference>
<dbReference type="Gene3D" id="3.30.230.10">
    <property type="match status" value="1"/>
</dbReference>
<dbReference type="Gene3D" id="3.30.70.890">
    <property type="entry name" value="GHMP kinase, C-terminal domain"/>
    <property type="match status" value="1"/>
</dbReference>
<dbReference type="HAMAP" id="MF_00384">
    <property type="entry name" value="Homoser_kinase"/>
    <property type="match status" value="1"/>
</dbReference>
<dbReference type="InterPro" id="IPR013750">
    <property type="entry name" value="GHMP_kinase_C_dom"/>
</dbReference>
<dbReference type="InterPro" id="IPR036554">
    <property type="entry name" value="GHMP_kinase_C_sf"/>
</dbReference>
<dbReference type="InterPro" id="IPR006204">
    <property type="entry name" value="GHMP_kinase_N_dom"/>
</dbReference>
<dbReference type="InterPro" id="IPR006203">
    <property type="entry name" value="GHMP_knse_ATP-bd_CS"/>
</dbReference>
<dbReference type="InterPro" id="IPR000870">
    <property type="entry name" value="Homoserine_kinase"/>
</dbReference>
<dbReference type="InterPro" id="IPR020568">
    <property type="entry name" value="Ribosomal_Su5_D2-typ_SF"/>
</dbReference>
<dbReference type="InterPro" id="IPR014721">
    <property type="entry name" value="Ribsml_uS5_D2-typ_fold_subgr"/>
</dbReference>
<dbReference type="NCBIfam" id="NF002288">
    <property type="entry name" value="PRK01212.1-4"/>
    <property type="match status" value="1"/>
</dbReference>
<dbReference type="NCBIfam" id="TIGR00191">
    <property type="entry name" value="thrB"/>
    <property type="match status" value="1"/>
</dbReference>
<dbReference type="PANTHER" id="PTHR20861:SF1">
    <property type="entry name" value="HOMOSERINE KINASE"/>
    <property type="match status" value="1"/>
</dbReference>
<dbReference type="PANTHER" id="PTHR20861">
    <property type="entry name" value="HOMOSERINE/4-DIPHOSPHOCYTIDYL-2-C-METHYL-D-ERYTHRITOL KINASE"/>
    <property type="match status" value="1"/>
</dbReference>
<dbReference type="Pfam" id="PF08544">
    <property type="entry name" value="GHMP_kinases_C"/>
    <property type="match status" value="1"/>
</dbReference>
<dbReference type="Pfam" id="PF00288">
    <property type="entry name" value="GHMP_kinases_N"/>
    <property type="match status" value="1"/>
</dbReference>
<dbReference type="PIRSF" id="PIRSF000676">
    <property type="entry name" value="Homoser_kin"/>
    <property type="match status" value="1"/>
</dbReference>
<dbReference type="PRINTS" id="PR00958">
    <property type="entry name" value="HOMSERKINASE"/>
</dbReference>
<dbReference type="SUPFAM" id="SSF55060">
    <property type="entry name" value="GHMP Kinase, C-terminal domain"/>
    <property type="match status" value="1"/>
</dbReference>
<dbReference type="SUPFAM" id="SSF54211">
    <property type="entry name" value="Ribosomal protein S5 domain 2-like"/>
    <property type="match status" value="1"/>
</dbReference>
<dbReference type="PROSITE" id="PS00627">
    <property type="entry name" value="GHMP_KINASES_ATP"/>
    <property type="match status" value="1"/>
</dbReference>
<feature type="chain" id="PRO_1000049132" description="Homoserine kinase">
    <location>
        <begin position="1"/>
        <end position="309"/>
    </location>
</feature>
<feature type="binding site" evidence="1">
    <location>
        <begin position="91"/>
        <end position="101"/>
    </location>
    <ligand>
        <name>ATP</name>
        <dbReference type="ChEBI" id="CHEBI:30616"/>
    </ligand>
</feature>
<reference key="1">
    <citation type="journal article" date="2010" name="PLoS ONE">
        <title>Genome sequence of Cronobacter sakazakii BAA-894 and comparative genomic hybridization analysis with other Cronobacter species.</title>
        <authorList>
            <person name="Kucerova E."/>
            <person name="Clifton S.W."/>
            <person name="Xia X.Q."/>
            <person name="Long F."/>
            <person name="Porwollik S."/>
            <person name="Fulton L."/>
            <person name="Fronick C."/>
            <person name="Minx P."/>
            <person name="Kyung K."/>
            <person name="Warren W."/>
            <person name="Fulton R."/>
            <person name="Feng D."/>
            <person name="Wollam A."/>
            <person name="Shah N."/>
            <person name="Bhonagiri V."/>
            <person name="Nash W.E."/>
            <person name="Hallsworth-Pepin K."/>
            <person name="Wilson R.K."/>
            <person name="McClelland M."/>
            <person name="Forsythe S.J."/>
        </authorList>
    </citation>
    <scope>NUCLEOTIDE SEQUENCE [LARGE SCALE GENOMIC DNA]</scope>
    <source>
        <strain>ATCC BAA-894</strain>
    </source>
</reference>
<gene>
    <name evidence="1" type="primary">thrB</name>
    <name type="ordered locus">ESA_03334</name>
</gene>
<proteinExistence type="inferred from homology"/>
<name>KHSE_CROS8</name>